<gene>
    <name evidence="8" type="primary">mcu</name>
    <name evidence="11" type="ORF">DDB0186972</name>
</gene>
<comment type="function">
    <text evidence="4 6">Mitochondrial inner membrane calcium uniporter that mediates calcium uptake into mitochondria (PubMed:24889638, PubMed:33296646). Constitutes a pore-forming and calcium-conducting subunit (PubMed:24889638, PubMed:33296646). Mitochondrial calcium homeostasis plays key roles in cellular physiology and regulates cell bioenergetics, cytoplasmic calcium signals and activation of cell death pathways (PubMed:24889638). Sufficient to operate as a pore-forming channel without the need of calcium-sensor or auxiliary subunit (PubMed:33296646).</text>
</comment>
<comment type="catalytic activity">
    <reaction evidence="6">
        <text>Ca(2+)(in) = Ca(2+)(out)</text>
        <dbReference type="Rhea" id="RHEA:29671"/>
        <dbReference type="ChEBI" id="CHEBI:29108"/>
    </reaction>
</comment>
<comment type="activity regulation">
    <text evidence="4">Inhibited by ruthenium red or its derivative Ru360.</text>
</comment>
<comment type="subunit">
    <text evidence="5">Homooligomer.</text>
</comment>
<comment type="subcellular location">
    <subcellularLocation>
        <location evidence="4">Mitochondrion inner membrane</location>
        <topology evidence="3">Multi-pass membrane protein</topology>
    </subcellularLocation>
</comment>
<comment type="domain">
    <text evidence="1">The selectivity filter, in which calcium ions are arranged in single file, is composed of two acidic rings separated by one helical turn along the central axis of the channel pore.</text>
</comment>
<comment type="similarity">
    <text evidence="9">Belongs to the MCU (TC 1.A.77) family.</text>
</comment>
<dbReference type="EMBL" id="AAFI02000085">
    <property type="protein sequence ID" value="EAL64239.1"/>
    <property type="molecule type" value="Genomic_DNA"/>
</dbReference>
<dbReference type="RefSeq" id="XP_637750.1">
    <property type="nucleotide sequence ID" value="XM_632658.1"/>
</dbReference>
<dbReference type="PDB" id="5Z2H">
    <property type="method" value="X-ray"/>
    <property type="resolution" value="1.67 A"/>
    <property type="chains" value="A/B=29-126"/>
</dbReference>
<dbReference type="PDB" id="5Z2I">
    <property type="method" value="X-ray"/>
    <property type="resolution" value="2.14 A"/>
    <property type="chains" value="A/B/C/D=29-126"/>
</dbReference>
<dbReference type="PDBsum" id="5Z2H"/>
<dbReference type="PDBsum" id="5Z2I"/>
<dbReference type="SMR" id="Q54LT0"/>
<dbReference type="FunCoup" id="Q54LT0">
    <property type="interactions" value="45"/>
</dbReference>
<dbReference type="STRING" id="44689.Q54LT0"/>
<dbReference type="TCDB" id="1.A.77.1.4">
    <property type="family name" value="the mg(2+)/ca(2+) uniporter (mcu) family"/>
</dbReference>
<dbReference type="PaxDb" id="44689-DDB0186972"/>
<dbReference type="KEGG" id="ddi:DDB_G0286429"/>
<dbReference type="dictyBase" id="DDB_G0286429">
    <property type="gene designation" value="mcu"/>
</dbReference>
<dbReference type="VEuPathDB" id="AmoebaDB:DDB_G0286429"/>
<dbReference type="eggNOG" id="KOG2966">
    <property type="taxonomic scope" value="Eukaryota"/>
</dbReference>
<dbReference type="HOGENOM" id="CLU_041073_0_0_1"/>
<dbReference type="InParanoid" id="Q54LT0"/>
<dbReference type="OMA" id="DHSGCVV"/>
<dbReference type="PhylomeDB" id="Q54LT0"/>
<dbReference type="Reactome" id="R-DDI-8949215">
    <property type="pathway name" value="Mitochondrial calcium ion transport"/>
</dbReference>
<dbReference type="PRO" id="PR:Q54LT0"/>
<dbReference type="Proteomes" id="UP000002195">
    <property type="component" value="Chromosome 4"/>
</dbReference>
<dbReference type="GO" id="GO:0005739">
    <property type="term" value="C:mitochondrion"/>
    <property type="evidence" value="ECO:0000314"/>
    <property type="project" value="dictyBase"/>
</dbReference>
<dbReference type="GO" id="GO:1990246">
    <property type="term" value="C:uniplex complex"/>
    <property type="evidence" value="ECO:0000318"/>
    <property type="project" value="GO_Central"/>
</dbReference>
<dbReference type="GO" id="GO:0005262">
    <property type="term" value="F:calcium channel activity"/>
    <property type="evidence" value="ECO:0000314"/>
    <property type="project" value="UniProtKB"/>
</dbReference>
<dbReference type="GO" id="GO:0005509">
    <property type="term" value="F:calcium ion binding"/>
    <property type="evidence" value="ECO:0000304"/>
    <property type="project" value="dictyBase"/>
</dbReference>
<dbReference type="GO" id="GO:0015292">
    <property type="term" value="F:uniporter activity"/>
    <property type="evidence" value="ECO:0000318"/>
    <property type="project" value="GO_Central"/>
</dbReference>
<dbReference type="GO" id="GO:0036444">
    <property type="term" value="P:calcium import into the mitochondrion"/>
    <property type="evidence" value="ECO:0000315"/>
    <property type="project" value="dictyBase"/>
</dbReference>
<dbReference type="GO" id="GO:0051560">
    <property type="term" value="P:mitochondrial calcium ion homeostasis"/>
    <property type="evidence" value="ECO:0000318"/>
    <property type="project" value="GO_Central"/>
</dbReference>
<dbReference type="InterPro" id="IPR006769">
    <property type="entry name" value="MCU_C"/>
</dbReference>
<dbReference type="InterPro" id="IPR039055">
    <property type="entry name" value="MCU_fam"/>
</dbReference>
<dbReference type="PANTHER" id="PTHR13462">
    <property type="entry name" value="CALCIUM UNIPORTER PROTEIN, MITOCHONDRIAL"/>
    <property type="match status" value="1"/>
</dbReference>
<dbReference type="PANTHER" id="PTHR13462:SF10">
    <property type="entry name" value="CALCIUM UNIPORTER PROTEIN, MITOCHONDRIAL"/>
    <property type="match status" value="1"/>
</dbReference>
<dbReference type="Pfam" id="PF04678">
    <property type="entry name" value="MCU"/>
    <property type="match status" value="1"/>
</dbReference>
<evidence type="ECO:0000250" key="1">
    <source>
        <dbReference type="UniProtKB" id="D6WIX5"/>
    </source>
</evidence>
<evidence type="ECO:0000250" key="2">
    <source>
        <dbReference type="UniProtKB" id="Q8NE86"/>
    </source>
</evidence>
<evidence type="ECO:0000255" key="3"/>
<evidence type="ECO:0000269" key="4">
    <source>
    </source>
</evidence>
<evidence type="ECO:0000269" key="5">
    <source>
    </source>
</evidence>
<evidence type="ECO:0000269" key="6">
    <source>
    </source>
</evidence>
<evidence type="ECO:0000303" key="7">
    <source>
    </source>
</evidence>
<evidence type="ECO:0000303" key="8">
    <source>
    </source>
</evidence>
<evidence type="ECO:0000305" key="9"/>
<evidence type="ECO:0000305" key="10">
    <source>
    </source>
</evidence>
<evidence type="ECO:0000312" key="11">
    <source>
        <dbReference type="EMBL" id="EAL64239.1"/>
    </source>
</evidence>
<evidence type="ECO:0007744" key="12">
    <source>
        <dbReference type="PDB" id="5Z2H"/>
    </source>
</evidence>
<evidence type="ECO:0007744" key="13">
    <source>
        <dbReference type="PDB" id="5Z2I"/>
    </source>
</evidence>
<evidence type="ECO:0007829" key="14">
    <source>
        <dbReference type="PDB" id="5Z2H"/>
    </source>
</evidence>
<sequence>MNSFVIRNGFGLVRTFNTRLFTTSTQNLEGELKTILGQAKVSKLQEKLKLDPRSKITFNDFKGIAKEVGIEEKEINSVSNALAQSGSIIYLPNSLNENLKTSVFTKPAHIYQSLEHILDIENKGVGLNKLIESKKSEINSLRQKIQPLEEKKQVIDRKAHRRATAIIWTGLGYCFAQAAILARLTWWDLSWDIIEPVSYFLTFGSVLIGYTYFTMTKTEFTYEALNHRLFSKRQDKLFKRNNFPKEDYENLVQAIDKKEKELKELELATKYDHTH</sequence>
<accession>Q54LT0</accession>
<name>MCU_DICDI</name>
<organism>
    <name type="scientific">Dictyostelium discoideum</name>
    <name type="common">Social amoeba</name>
    <dbReference type="NCBI Taxonomy" id="44689"/>
    <lineage>
        <taxon>Eukaryota</taxon>
        <taxon>Amoebozoa</taxon>
        <taxon>Evosea</taxon>
        <taxon>Eumycetozoa</taxon>
        <taxon>Dictyostelia</taxon>
        <taxon>Dictyosteliales</taxon>
        <taxon>Dictyosteliaceae</taxon>
        <taxon>Dictyostelium</taxon>
    </lineage>
</organism>
<keyword id="KW-0002">3D-structure</keyword>
<keyword id="KW-0106">Calcium</keyword>
<keyword id="KW-0107">Calcium channel</keyword>
<keyword id="KW-0109">Calcium transport</keyword>
<keyword id="KW-0175">Coiled coil</keyword>
<keyword id="KW-0407">Ion channel</keyword>
<keyword id="KW-0406">Ion transport</keyword>
<keyword id="KW-0472">Membrane</keyword>
<keyword id="KW-0479">Metal-binding</keyword>
<keyword id="KW-0496">Mitochondrion</keyword>
<keyword id="KW-0999">Mitochondrion inner membrane</keyword>
<keyword id="KW-1185">Reference proteome</keyword>
<keyword id="KW-0809">Transit peptide</keyword>
<keyword id="KW-0812">Transmembrane</keyword>
<keyword id="KW-1133">Transmembrane helix</keyword>
<keyword id="KW-0813">Transport</keyword>
<feature type="transit peptide" description="Mitochondrion" evidence="3">
    <location>
        <begin position="1"/>
        <end position="28"/>
    </location>
</feature>
<feature type="chain" id="PRO_0000437214" description="Calcium uniporter protein, mitochondrial" evidence="3">
    <location>
        <begin position="29"/>
        <end position="275"/>
    </location>
</feature>
<feature type="topological domain" description="Mitochondrial matrix" evidence="10">
    <location>
        <begin position="29"/>
        <end position="165"/>
    </location>
</feature>
<feature type="transmembrane region" description="Helical" evidence="3">
    <location>
        <begin position="166"/>
        <end position="186"/>
    </location>
</feature>
<feature type="topological domain" description="Mitochondrial intermembrane" evidence="10">
    <location>
        <begin position="187"/>
        <end position="192"/>
    </location>
</feature>
<feature type="transmembrane region" description="Helical" evidence="3">
    <location>
        <begin position="193"/>
        <end position="213"/>
    </location>
</feature>
<feature type="topological domain" description="Mitochondrial matrix" evidence="10">
    <location>
        <begin position="214"/>
        <end position="275"/>
    </location>
</feature>
<feature type="coiled-coil region" evidence="3">
    <location>
        <begin position="125"/>
        <end position="157"/>
    </location>
</feature>
<feature type="coiled-coil region" evidence="3">
    <location>
        <begin position="244"/>
        <end position="270"/>
    </location>
</feature>
<feature type="short sequence motif" description="Selectivity filter" evidence="2">
    <location>
        <begin position="191"/>
        <end position="199"/>
    </location>
</feature>
<feature type="binding site" evidence="2">
    <location>
        <position position="195"/>
    </location>
    <ligand>
        <name>Ca(2+)</name>
        <dbReference type="ChEBI" id="CHEBI:29108"/>
    </ligand>
</feature>
<feature type="mutagenesis site" description="Does not affect homooligomerization." evidence="5">
    <original>Q</original>
    <variation>A</variation>
    <location>
        <position position="38"/>
    </location>
</feature>
<feature type="mutagenesis site" description="Impaired homooligomerization; when associated with A-93." evidence="5">
    <original>D</original>
    <variation>A</variation>
    <location>
        <position position="60"/>
    </location>
</feature>
<feature type="mutagenesis site" description="Impaired homooligomerization." evidence="5">
    <original>E</original>
    <variation>A</variation>
    <location>
        <position position="72"/>
    </location>
</feature>
<feature type="mutagenesis site" description="Impaired homooligomerization." evidence="5">
    <original>E</original>
    <variation>A</variation>
    <location>
        <position position="74"/>
    </location>
</feature>
<feature type="mutagenesis site" description="Does not affect homooligomerization." evidence="5">
    <original>SGS</original>
    <variation>AGA</variation>
    <location>
        <begin position="85"/>
        <end position="87"/>
    </location>
</feature>
<feature type="mutagenesis site" description="Impaired homooligomerization; when associated with A-60." evidence="5">
    <original>N</original>
    <variation>A</variation>
    <location>
        <position position="93"/>
    </location>
</feature>
<feature type="mutagenesis site" description="Abolished calcium uptake; when associated with S-220." evidence="6">
    <original>Y</original>
    <variation>S</variation>
    <location>
        <position position="212"/>
    </location>
</feature>
<feature type="mutagenesis site" description="Abolished calcium uptake; when associated with S-212." evidence="6">
    <original>F</original>
    <variation>S</variation>
    <location>
        <position position="220"/>
    </location>
</feature>
<feature type="helix" evidence="14">
    <location>
        <begin position="31"/>
        <end position="50"/>
    </location>
</feature>
<feature type="strand" evidence="14">
    <location>
        <begin position="54"/>
        <end position="57"/>
    </location>
</feature>
<feature type="helix" evidence="14">
    <location>
        <begin position="58"/>
        <end position="67"/>
    </location>
</feature>
<feature type="helix" evidence="14">
    <location>
        <begin position="72"/>
        <end position="84"/>
    </location>
</feature>
<feature type="helix" evidence="14">
    <location>
        <begin position="97"/>
        <end position="100"/>
    </location>
</feature>
<feature type="strand" evidence="14">
    <location>
        <begin position="102"/>
        <end position="105"/>
    </location>
</feature>
<feature type="helix" evidence="14">
    <location>
        <begin position="108"/>
        <end position="118"/>
    </location>
</feature>
<protein>
    <recommendedName>
        <fullName>Calcium uniporter protein, mitochondrial</fullName>
        <shortName evidence="7">DdMCU</shortName>
    </recommendedName>
</protein>
<proteinExistence type="evidence at protein level"/>
<reference key="1">
    <citation type="journal article" date="2005" name="Nature">
        <title>The genome of the social amoeba Dictyostelium discoideum.</title>
        <authorList>
            <person name="Eichinger L."/>
            <person name="Pachebat J.A."/>
            <person name="Gloeckner G."/>
            <person name="Rajandream M.A."/>
            <person name="Sucgang R."/>
            <person name="Berriman M."/>
            <person name="Song J."/>
            <person name="Olsen R."/>
            <person name="Szafranski K."/>
            <person name="Xu Q."/>
            <person name="Tunggal B."/>
            <person name="Kummerfeld S."/>
            <person name="Madera M."/>
            <person name="Konfortov B.A."/>
            <person name="Rivero F."/>
            <person name="Bankier A.T."/>
            <person name="Lehmann R."/>
            <person name="Hamlin N."/>
            <person name="Davies R."/>
            <person name="Gaudet P."/>
            <person name="Fey P."/>
            <person name="Pilcher K."/>
            <person name="Chen G."/>
            <person name="Saunders D."/>
            <person name="Sodergren E.J."/>
            <person name="Davis P."/>
            <person name="Kerhornou A."/>
            <person name="Nie X."/>
            <person name="Hall N."/>
            <person name="Anjard C."/>
            <person name="Hemphill L."/>
            <person name="Bason N."/>
            <person name="Farbrother P."/>
            <person name="Desany B."/>
            <person name="Just E."/>
            <person name="Morio T."/>
            <person name="Rost R."/>
            <person name="Churcher C.M."/>
            <person name="Cooper J."/>
            <person name="Haydock S."/>
            <person name="van Driessche N."/>
            <person name="Cronin A."/>
            <person name="Goodhead I."/>
            <person name="Muzny D.M."/>
            <person name="Mourier T."/>
            <person name="Pain A."/>
            <person name="Lu M."/>
            <person name="Harper D."/>
            <person name="Lindsay R."/>
            <person name="Hauser H."/>
            <person name="James K.D."/>
            <person name="Quiles M."/>
            <person name="Madan Babu M."/>
            <person name="Saito T."/>
            <person name="Buchrieser C."/>
            <person name="Wardroper A."/>
            <person name="Felder M."/>
            <person name="Thangavelu M."/>
            <person name="Johnson D."/>
            <person name="Knights A."/>
            <person name="Loulseged H."/>
            <person name="Mungall K.L."/>
            <person name="Oliver K."/>
            <person name="Price C."/>
            <person name="Quail M.A."/>
            <person name="Urushihara H."/>
            <person name="Hernandez J."/>
            <person name="Rabbinowitsch E."/>
            <person name="Steffen D."/>
            <person name="Sanders M."/>
            <person name="Ma J."/>
            <person name="Kohara Y."/>
            <person name="Sharp S."/>
            <person name="Simmonds M.N."/>
            <person name="Spiegler S."/>
            <person name="Tivey A."/>
            <person name="Sugano S."/>
            <person name="White B."/>
            <person name="Walker D."/>
            <person name="Woodward J.R."/>
            <person name="Winckler T."/>
            <person name="Tanaka Y."/>
            <person name="Shaulsky G."/>
            <person name="Schleicher M."/>
            <person name="Weinstock G.M."/>
            <person name="Rosenthal A."/>
            <person name="Cox E.C."/>
            <person name="Chisholm R.L."/>
            <person name="Gibbs R.A."/>
            <person name="Loomis W.F."/>
            <person name="Platzer M."/>
            <person name="Kay R.R."/>
            <person name="Williams J.G."/>
            <person name="Dear P.H."/>
            <person name="Noegel A.A."/>
            <person name="Barrell B.G."/>
            <person name="Kuspa A."/>
        </authorList>
    </citation>
    <scope>NUCLEOTIDE SEQUENCE [LARGE SCALE GENOMIC DNA]</scope>
    <source>
        <strain>AX4</strain>
    </source>
</reference>
<reference key="2">
    <citation type="journal article" date="2014" name="Proc. Natl. Acad. Sci. U.S.A.">
        <title>Reconstitution of the mitochondrial calcium uniporter in yeast.</title>
        <authorList>
            <person name="Kovacs-Bogdan E."/>
            <person name="Sancak Y."/>
            <person name="Kamer K.J."/>
            <person name="Plovanich M."/>
            <person name="Jambhekar A."/>
            <person name="Huber R.J."/>
            <person name="Myre M.A."/>
            <person name="Blower M.D."/>
            <person name="Mootha V.K."/>
        </authorList>
    </citation>
    <scope>FUNCTION</scope>
    <scope>ACTIVITY REGULATION</scope>
    <scope>SUBCELLULAR LOCATION</scope>
</reference>
<reference key="3">
    <citation type="journal article" date="2020" name="Cell Rep.">
        <title>Mechanisms of EMRE-dependent MCU opening in the mitochondrial calcium uniporter complex.</title>
        <authorList>
            <person name="Van Keuren A.M."/>
            <person name="Tsai C.W."/>
            <person name="Balderas E."/>
            <person name="Rodriguez M.X."/>
            <person name="Chaudhuri D."/>
            <person name="Tsai M.F."/>
        </authorList>
    </citation>
    <scope>FUNCTION</scope>
    <scope>TRANSPORTER ACTIVITY</scope>
    <scope>MUTAGENESIS OF TYR-212 AND PHE-220</scope>
</reference>
<reference evidence="12 13" key="4">
    <citation type="journal article" date="2020" name="ACS Omega">
        <title>Structural characterization of the N-terminal domain of the Dictyostelium discoideum mitochondrial calcium uniporter.</title>
        <authorList>
            <person name="Yuan Y."/>
            <person name="Cao C."/>
            <person name="Wen M."/>
            <person name="Li M."/>
            <person name="Dong Y."/>
            <person name="Wu L."/>
            <person name="Wu J."/>
            <person name="Cui T."/>
            <person name="Li D."/>
            <person name="Chou J.J."/>
            <person name="OuYang B."/>
        </authorList>
    </citation>
    <scope>X-RAY CRYSTALLOGRAPHY (1.67 ANGSTROMS) OF 29-126</scope>
    <scope>SUBUNIT</scope>
    <scope>MUTAGENESIS OF GLN-38; ASP-60; GLU-72; GLU-74; 85-SER--SER-87 AND ASN-93</scope>
</reference>